<organism>
    <name type="scientific">Thioalkalivibrio sulfidiphilus (strain HL-EbGR7)</name>
    <dbReference type="NCBI Taxonomy" id="396588"/>
    <lineage>
        <taxon>Bacteria</taxon>
        <taxon>Pseudomonadati</taxon>
        <taxon>Pseudomonadota</taxon>
        <taxon>Gammaproteobacteria</taxon>
        <taxon>Chromatiales</taxon>
        <taxon>Ectothiorhodospiraceae</taxon>
        <taxon>Thioalkalivibrio</taxon>
    </lineage>
</organism>
<reference key="1">
    <citation type="journal article" date="2011" name="Stand. Genomic Sci.">
        <title>Complete genome sequence of 'Thioalkalivibrio sulfidophilus' HL-EbGr7.</title>
        <authorList>
            <person name="Muyzer G."/>
            <person name="Sorokin D.Y."/>
            <person name="Mavromatis K."/>
            <person name="Lapidus A."/>
            <person name="Clum A."/>
            <person name="Ivanova N."/>
            <person name="Pati A."/>
            <person name="d'Haeseleer P."/>
            <person name="Woyke T."/>
            <person name="Kyrpides N.C."/>
        </authorList>
    </citation>
    <scope>NUCLEOTIDE SEQUENCE [LARGE SCALE GENOMIC DNA]</scope>
    <source>
        <strain>HL-EbGR7</strain>
    </source>
</reference>
<accession>B8GQ51</accession>
<protein>
    <recommendedName>
        <fullName evidence="1">Elongation factor Ts</fullName>
        <shortName evidence="1">EF-Ts</shortName>
    </recommendedName>
</protein>
<proteinExistence type="inferred from homology"/>
<name>EFTS_THISH</name>
<gene>
    <name evidence="1" type="primary">tsf</name>
    <name type="ordered locus">Tgr7_1160</name>
</gene>
<dbReference type="EMBL" id="CP001339">
    <property type="protein sequence ID" value="ACL72246.1"/>
    <property type="molecule type" value="Genomic_DNA"/>
</dbReference>
<dbReference type="RefSeq" id="WP_012637729.1">
    <property type="nucleotide sequence ID" value="NC_011901.1"/>
</dbReference>
<dbReference type="SMR" id="B8GQ51"/>
<dbReference type="STRING" id="396588.Tgr7_1160"/>
<dbReference type="KEGG" id="tgr:Tgr7_1160"/>
<dbReference type="eggNOG" id="COG0264">
    <property type="taxonomic scope" value="Bacteria"/>
</dbReference>
<dbReference type="HOGENOM" id="CLU_047155_0_0_6"/>
<dbReference type="OrthoDB" id="9808348at2"/>
<dbReference type="Proteomes" id="UP000002383">
    <property type="component" value="Chromosome"/>
</dbReference>
<dbReference type="GO" id="GO:0005737">
    <property type="term" value="C:cytoplasm"/>
    <property type="evidence" value="ECO:0007669"/>
    <property type="project" value="UniProtKB-SubCell"/>
</dbReference>
<dbReference type="GO" id="GO:0003746">
    <property type="term" value="F:translation elongation factor activity"/>
    <property type="evidence" value="ECO:0007669"/>
    <property type="project" value="UniProtKB-UniRule"/>
</dbReference>
<dbReference type="CDD" id="cd14275">
    <property type="entry name" value="UBA_EF-Ts"/>
    <property type="match status" value="1"/>
</dbReference>
<dbReference type="FunFam" id="1.10.286.20:FF:000001">
    <property type="entry name" value="Elongation factor Ts"/>
    <property type="match status" value="1"/>
</dbReference>
<dbReference type="FunFam" id="1.10.8.10:FF:000001">
    <property type="entry name" value="Elongation factor Ts"/>
    <property type="match status" value="1"/>
</dbReference>
<dbReference type="Gene3D" id="1.10.286.20">
    <property type="match status" value="1"/>
</dbReference>
<dbReference type="Gene3D" id="1.10.8.10">
    <property type="entry name" value="DNA helicase RuvA subunit, C-terminal domain"/>
    <property type="match status" value="1"/>
</dbReference>
<dbReference type="Gene3D" id="3.30.479.20">
    <property type="entry name" value="Elongation factor Ts, dimerisation domain"/>
    <property type="match status" value="2"/>
</dbReference>
<dbReference type="HAMAP" id="MF_00050">
    <property type="entry name" value="EF_Ts"/>
    <property type="match status" value="1"/>
</dbReference>
<dbReference type="InterPro" id="IPR036402">
    <property type="entry name" value="EF-Ts_dimer_sf"/>
</dbReference>
<dbReference type="InterPro" id="IPR001816">
    <property type="entry name" value="Transl_elong_EFTs/EF1B"/>
</dbReference>
<dbReference type="InterPro" id="IPR014039">
    <property type="entry name" value="Transl_elong_EFTs/EF1B_dimer"/>
</dbReference>
<dbReference type="InterPro" id="IPR018101">
    <property type="entry name" value="Transl_elong_Ts_CS"/>
</dbReference>
<dbReference type="InterPro" id="IPR009060">
    <property type="entry name" value="UBA-like_sf"/>
</dbReference>
<dbReference type="NCBIfam" id="TIGR00116">
    <property type="entry name" value="tsf"/>
    <property type="match status" value="1"/>
</dbReference>
<dbReference type="PANTHER" id="PTHR11741">
    <property type="entry name" value="ELONGATION FACTOR TS"/>
    <property type="match status" value="1"/>
</dbReference>
<dbReference type="PANTHER" id="PTHR11741:SF0">
    <property type="entry name" value="ELONGATION FACTOR TS, MITOCHONDRIAL"/>
    <property type="match status" value="1"/>
</dbReference>
<dbReference type="Pfam" id="PF00889">
    <property type="entry name" value="EF_TS"/>
    <property type="match status" value="1"/>
</dbReference>
<dbReference type="SUPFAM" id="SSF54713">
    <property type="entry name" value="Elongation factor Ts (EF-Ts), dimerisation domain"/>
    <property type="match status" value="2"/>
</dbReference>
<dbReference type="SUPFAM" id="SSF46934">
    <property type="entry name" value="UBA-like"/>
    <property type="match status" value="1"/>
</dbReference>
<dbReference type="PROSITE" id="PS01126">
    <property type="entry name" value="EF_TS_1"/>
    <property type="match status" value="1"/>
</dbReference>
<dbReference type="PROSITE" id="PS01127">
    <property type="entry name" value="EF_TS_2"/>
    <property type="match status" value="1"/>
</dbReference>
<sequence length="293" mass="31438">MTITASMVKELRERTGAGMMECKKALAETNGDMEAAIELMRKSGAAKADKKAGRIAAEGQVVVALSDDATRAAMVEVNCETDFVAKDENFEKFANRVAEVVLSGAPADVSALMAQNMDGASVEETRAALIAKVGENVQVRRFERLEAAAGGTLGFYRHGNRIGVAVELEGGDAELAKDICMHIAASRPVCVDETQVPQELLDKEREIFAAQAAESGKPAEIIEKMVSGRIKKYLAEITLVGQPFVKDPDKTVGKLLEGAGAKVRRFVRYEVGEGIEKKTENFAEEVMAQAKGA</sequence>
<comment type="function">
    <text evidence="1">Associates with the EF-Tu.GDP complex and induces the exchange of GDP to GTP. It remains bound to the aminoacyl-tRNA.EF-Tu.GTP complex up to the GTP hydrolysis stage on the ribosome.</text>
</comment>
<comment type="subcellular location">
    <subcellularLocation>
        <location evidence="1">Cytoplasm</location>
    </subcellularLocation>
</comment>
<comment type="similarity">
    <text evidence="1">Belongs to the EF-Ts family.</text>
</comment>
<feature type="chain" id="PRO_1000189897" description="Elongation factor Ts">
    <location>
        <begin position="1"/>
        <end position="293"/>
    </location>
</feature>
<feature type="region of interest" description="Involved in Mg(2+) ion dislocation from EF-Tu" evidence="1">
    <location>
        <begin position="81"/>
        <end position="84"/>
    </location>
</feature>
<evidence type="ECO:0000255" key="1">
    <source>
        <dbReference type="HAMAP-Rule" id="MF_00050"/>
    </source>
</evidence>
<keyword id="KW-0963">Cytoplasm</keyword>
<keyword id="KW-0251">Elongation factor</keyword>
<keyword id="KW-0648">Protein biosynthesis</keyword>
<keyword id="KW-1185">Reference proteome</keyword>